<organism>
    <name type="scientific">Dictyostelium discoideum</name>
    <name type="common">Social amoeba</name>
    <dbReference type="NCBI Taxonomy" id="44689"/>
    <lineage>
        <taxon>Eukaryota</taxon>
        <taxon>Amoebozoa</taxon>
        <taxon>Evosea</taxon>
        <taxon>Eumycetozoa</taxon>
        <taxon>Dictyostelia</taxon>
        <taxon>Dictyosteliales</taxon>
        <taxon>Dictyosteliaceae</taxon>
        <taxon>Dictyostelium</taxon>
    </lineage>
</organism>
<protein>
    <recommendedName>
        <fullName>Putative uncharacterized transmembrane protein DDB_G0281897</fullName>
    </recommendedName>
</protein>
<accession>Q54TA2</accession>
<feature type="signal peptide" evidence="1">
    <location>
        <begin position="1"/>
        <end position="23"/>
    </location>
</feature>
<feature type="chain" id="PRO_0000352415" description="Putative uncharacterized transmembrane protein DDB_G0281897">
    <location>
        <begin position="24"/>
        <end position="201"/>
    </location>
</feature>
<feature type="topological domain" description="Extracellular" evidence="1">
    <location>
        <begin position="24"/>
        <end position="178"/>
    </location>
</feature>
<feature type="transmembrane region" description="Helical" evidence="1">
    <location>
        <begin position="179"/>
        <end position="199"/>
    </location>
</feature>
<feature type="topological domain" description="Cytoplasmic" evidence="1">
    <location>
        <begin position="200"/>
        <end position="201"/>
    </location>
</feature>
<feature type="region of interest" description="Disordered" evidence="2">
    <location>
        <begin position="122"/>
        <end position="157"/>
    </location>
</feature>
<feature type="compositionally biased region" description="Polar residues" evidence="2">
    <location>
        <begin position="123"/>
        <end position="148"/>
    </location>
</feature>
<feature type="glycosylation site" description="N-linked (GlcNAc...) asparagine" evidence="1">
    <location>
        <position position="114"/>
    </location>
</feature>
<feature type="glycosylation site" description="N-linked (GlcNAc...) asparagine" evidence="1">
    <location>
        <position position="134"/>
    </location>
</feature>
<gene>
    <name type="ORF">DDB_G0281897</name>
</gene>
<name>Y4276_DICDI</name>
<evidence type="ECO:0000255" key="1"/>
<evidence type="ECO:0000256" key="2">
    <source>
        <dbReference type="SAM" id="MobiDB-lite"/>
    </source>
</evidence>
<evidence type="ECO:0000305" key="3"/>
<keyword id="KW-0325">Glycoprotein</keyword>
<keyword id="KW-0472">Membrane</keyword>
<keyword id="KW-1185">Reference proteome</keyword>
<keyword id="KW-0732">Signal</keyword>
<keyword id="KW-0812">Transmembrane</keyword>
<keyword id="KW-1133">Transmembrane helix</keyword>
<dbReference type="EMBL" id="AAFI02000043">
    <property type="protein sequence ID" value="EAL66508.1"/>
    <property type="molecule type" value="Genomic_DNA"/>
</dbReference>
<dbReference type="RefSeq" id="XP_640487.1">
    <property type="nucleotide sequence ID" value="XM_635395.1"/>
</dbReference>
<dbReference type="SMR" id="Q54TA2"/>
<dbReference type="GlyGen" id="Q54TA2">
    <property type="glycosylation" value="2 sites"/>
</dbReference>
<dbReference type="PaxDb" id="44689-DDB0204276"/>
<dbReference type="EnsemblProtists" id="EAL66508">
    <property type="protein sequence ID" value="EAL66508"/>
    <property type="gene ID" value="DDB_G0281897"/>
</dbReference>
<dbReference type="GeneID" id="8623301"/>
<dbReference type="KEGG" id="ddi:DDB_G0281897"/>
<dbReference type="dictyBase" id="DDB_G0281897"/>
<dbReference type="VEuPathDB" id="AmoebaDB:DDB_G0281897"/>
<dbReference type="HOGENOM" id="CLU_1362583_0_0_1"/>
<dbReference type="InParanoid" id="Q54TA2"/>
<dbReference type="PRO" id="PR:Q54TA2"/>
<dbReference type="Proteomes" id="UP000002195">
    <property type="component" value="Chromosome 3"/>
</dbReference>
<dbReference type="GO" id="GO:0016020">
    <property type="term" value="C:membrane"/>
    <property type="evidence" value="ECO:0007669"/>
    <property type="project" value="UniProtKB-SubCell"/>
</dbReference>
<proteinExistence type="inferred from homology"/>
<reference key="1">
    <citation type="journal article" date="2005" name="Nature">
        <title>The genome of the social amoeba Dictyostelium discoideum.</title>
        <authorList>
            <person name="Eichinger L."/>
            <person name="Pachebat J.A."/>
            <person name="Gloeckner G."/>
            <person name="Rajandream M.A."/>
            <person name="Sucgang R."/>
            <person name="Berriman M."/>
            <person name="Song J."/>
            <person name="Olsen R."/>
            <person name="Szafranski K."/>
            <person name="Xu Q."/>
            <person name="Tunggal B."/>
            <person name="Kummerfeld S."/>
            <person name="Madera M."/>
            <person name="Konfortov B.A."/>
            <person name="Rivero F."/>
            <person name="Bankier A.T."/>
            <person name="Lehmann R."/>
            <person name="Hamlin N."/>
            <person name="Davies R."/>
            <person name="Gaudet P."/>
            <person name="Fey P."/>
            <person name="Pilcher K."/>
            <person name="Chen G."/>
            <person name="Saunders D."/>
            <person name="Sodergren E.J."/>
            <person name="Davis P."/>
            <person name="Kerhornou A."/>
            <person name="Nie X."/>
            <person name="Hall N."/>
            <person name="Anjard C."/>
            <person name="Hemphill L."/>
            <person name="Bason N."/>
            <person name="Farbrother P."/>
            <person name="Desany B."/>
            <person name="Just E."/>
            <person name="Morio T."/>
            <person name="Rost R."/>
            <person name="Churcher C.M."/>
            <person name="Cooper J."/>
            <person name="Haydock S."/>
            <person name="van Driessche N."/>
            <person name="Cronin A."/>
            <person name="Goodhead I."/>
            <person name="Muzny D.M."/>
            <person name="Mourier T."/>
            <person name="Pain A."/>
            <person name="Lu M."/>
            <person name="Harper D."/>
            <person name="Lindsay R."/>
            <person name="Hauser H."/>
            <person name="James K.D."/>
            <person name="Quiles M."/>
            <person name="Madan Babu M."/>
            <person name="Saito T."/>
            <person name="Buchrieser C."/>
            <person name="Wardroper A."/>
            <person name="Felder M."/>
            <person name="Thangavelu M."/>
            <person name="Johnson D."/>
            <person name="Knights A."/>
            <person name="Loulseged H."/>
            <person name="Mungall K.L."/>
            <person name="Oliver K."/>
            <person name="Price C."/>
            <person name="Quail M.A."/>
            <person name="Urushihara H."/>
            <person name="Hernandez J."/>
            <person name="Rabbinowitsch E."/>
            <person name="Steffen D."/>
            <person name="Sanders M."/>
            <person name="Ma J."/>
            <person name="Kohara Y."/>
            <person name="Sharp S."/>
            <person name="Simmonds M.N."/>
            <person name="Spiegler S."/>
            <person name="Tivey A."/>
            <person name="Sugano S."/>
            <person name="White B."/>
            <person name="Walker D."/>
            <person name="Woodward J.R."/>
            <person name="Winckler T."/>
            <person name="Tanaka Y."/>
            <person name="Shaulsky G."/>
            <person name="Schleicher M."/>
            <person name="Weinstock G.M."/>
            <person name="Rosenthal A."/>
            <person name="Cox E.C."/>
            <person name="Chisholm R.L."/>
            <person name="Gibbs R.A."/>
            <person name="Loomis W.F."/>
            <person name="Platzer M."/>
            <person name="Kay R.R."/>
            <person name="Williams J.G."/>
            <person name="Dear P.H."/>
            <person name="Noegel A.A."/>
            <person name="Barrell B.G."/>
            <person name="Kuspa A."/>
        </authorList>
    </citation>
    <scope>NUCLEOTIDE SEQUENCE [LARGE SCALE GENOMIC DNA]</scope>
    <source>
        <strain>AX4</strain>
    </source>
</reference>
<sequence>MKILYFIFVIIINILLILNHVKSKYNTFIFENTDGFPECNREVPIDKCTLFCGRLFGGLSYDSEKLIFYEGENCYTMIHGEFLCSDTERTSFRMDNYLADDESWYKAFFNYLVNCTWDEKNTPETPSPTENAPNTSGGSSEGNHYTYKSSSSSSEHINDIPTYSHSGYGNYGEDPQRNIGISLSSSLIFISILFLIIFINN</sequence>
<comment type="subcellular location">
    <subcellularLocation>
        <location evidence="3">Membrane</location>
        <topology evidence="3">Single-pass type I membrane protein</topology>
    </subcellularLocation>
</comment>